<comment type="function">
    <text evidence="1">The glycine cleavage system catalyzes the degradation of glycine.</text>
</comment>
<comment type="catalytic activity">
    <reaction evidence="1">
        <text>N(6)-[(R)-S(8)-aminomethyldihydrolipoyl]-L-lysyl-[protein] + (6S)-5,6,7,8-tetrahydrofolate = N(6)-[(R)-dihydrolipoyl]-L-lysyl-[protein] + (6R)-5,10-methylene-5,6,7,8-tetrahydrofolate + NH4(+)</text>
        <dbReference type="Rhea" id="RHEA:16945"/>
        <dbReference type="Rhea" id="RHEA-COMP:10475"/>
        <dbReference type="Rhea" id="RHEA-COMP:10492"/>
        <dbReference type="ChEBI" id="CHEBI:15636"/>
        <dbReference type="ChEBI" id="CHEBI:28938"/>
        <dbReference type="ChEBI" id="CHEBI:57453"/>
        <dbReference type="ChEBI" id="CHEBI:83100"/>
        <dbReference type="ChEBI" id="CHEBI:83143"/>
        <dbReference type="EC" id="2.1.2.10"/>
    </reaction>
</comment>
<comment type="subunit">
    <text evidence="1">The glycine cleavage system is composed of four proteins: P, T, L and H.</text>
</comment>
<comment type="similarity">
    <text evidence="1">Belongs to the GcvT family.</text>
</comment>
<proteinExistence type="inferred from homology"/>
<name>GCST_SALSV</name>
<sequence>MAQQTPLYEQHTLCGARMVDFHGWMMPLHYGSQLDEHHAVRTDAGMFDVSHMTIVDLHGSRTREFLRYLLANDVAKLTKTGKALYSGMLNASGGVIDDLIVYYFTEDFFRLVVNSATREKDLSWITQHAEPYAIDITVRDDLSLIAVQGPNAQEKAATLFTDQQRHAVEGMKPFFGVQAGDLFIATTGYTGEAGYEIAMPNEKAADFWRALVEAGVKPCGLGARDTLRLEAGMNLYGQEMDEGISPLAANMGWTIAWEPADRDFIGREALEMQREKGHEQLVGLVMTEKGVLRNELPVRFTDAQGNQQEGIITSGTFSPTLGYSIALARVPAGIGETAIVQIRNREMPVKVTKPVFVRNGKAVA</sequence>
<keyword id="KW-0032">Aminotransferase</keyword>
<keyword id="KW-0808">Transferase</keyword>
<accession>B4TV24</accession>
<dbReference type="EC" id="2.1.2.10" evidence="1"/>
<dbReference type="EMBL" id="CP001127">
    <property type="protein sequence ID" value="ACF90425.1"/>
    <property type="molecule type" value="Genomic_DNA"/>
</dbReference>
<dbReference type="RefSeq" id="WP_000068738.1">
    <property type="nucleotide sequence ID" value="NC_011094.1"/>
</dbReference>
<dbReference type="SMR" id="B4TV24"/>
<dbReference type="KEGG" id="sew:SeSA_A3225"/>
<dbReference type="HOGENOM" id="CLU_007884_10_2_6"/>
<dbReference type="Proteomes" id="UP000001865">
    <property type="component" value="Chromosome"/>
</dbReference>
<dbReference type="GO" id="GO:0005829">
    <property type="term" value="C:cytosol"/>
    <property type="evidence" value="ECO:0007669"/>
    <property type="project" value="TreeGrafter"/>
</dbReference>
<dbReference type="GO" id="GO:0005960">
    <property type="term" value="C:glycine cleavage complex"/>
    <property type="evidence" value="ECO:0007669"/>
    <property type="project" value="InterPro"/>
</dbReference>
<dbReference type="GO" id="GO:0004047">
    <property type="term" value="F:aminomethyltransferase activity"/>
    <property type="evidence" value="ECO:0007669"/>
    <property type="project" value="UniProtKB-UniRule"/>
</dbReference>
<dbReference type="GO" id="GO:0008483">
    <property type="term" value="F:transaminase activity"/>
    <property type="evidence" value="ECO:0007669"/>
    <property type="project" value="UniProtKB-KW"/>
</dbReference>
<dbReference type="GO" id="GO:0019464">
    <property type="term" value="P:glycine decarboxylation via glycine cleavage system"/>
    <property type="evidence" value="ECO:0007669"/>
    <property type="project" value="UniProtKB-UniRule"/>
</dbReference>
<dbReference type="FunFam" id="2.40.30.110:FF:000001">
    <property type="entry name" value="Aminomethyltransferase"/>
    <property type="match status" value="1"/>
</dbReference>
<dbReference type="FunFam" id="3.30.70.1400:FF:000001">
    <property type="entry name" value="Aminomethyltransferase"/>
    <property type="match status" value="1"/>
</dbReference>
<dbReference type="FunFam" id="4.10.1250.10:FF:000001">
    <property type="entry name" value="Aminomethyltransferase"/>
    <property type="match status" value="1"/>
</dbReference>
<dbReference type="Gene3D" id="2.40.30.110">
    <property type="entry name" value="Aminomethyltransferase beta-barrel domains"/>
    <property type="match status" value="1"/>
</dbReference>
<dbReference type="Gene3D" id="3.30.70.1400">
    <property type="entry name" value="Aminomethyltransferase beta-barrel domains"/>
    <property type="match status" value="1"/>
</dbReference>
<dbReference type="Gene3D" id="4.10.1250.10">
    <property type="entry name" value="Aminomethyltransferase fragment"/>
    <property type="match status" value="1"/>
</dbReference>
<dbReference type="Gene3D" id="3.30.1360.120">
    <property type="entry name" value="Probable tRNA modification gtpase trme, domain 1"/>
    <property type="match status" value="1"/>
</dbReference>
<dbReference type="HAMAP" id="MF_00259">
    <property type="entry name" value="GcvT"/>
    <property type="match status" value="1"/>
</dbReference>
<dbReference type="InterPro" id="IPR006223">
    <property type="entry name" value="GCS_T"/>
</dbReference>
<dbReference type="InterPro" id="IPR022903">
    <property type="entry name" value="GCS_T_bac"/>
</dbReference>
<dbReference type="InterPro" id="IPR013977">
    <property type="entry name" value="GCST_C"/>
</dbReference>
<dbReference type="InterPro" id="IPR006222">
    <property type="entry name" value="GCV_T_N"/>
</dbReference>
<dbReference type="InterPro" id="IPR028896">
    <property type="entry name" value="GcvT/YgfZ/DmdA"/>
</dbReference>
<dbReference type="InterPro" id="IPR029043">
    <property type="entry name" value="GcvT/YgfZ_C"/>
</dbReference>
<dbReference type="InterPro" id="IPR027266">
    <property type="entry name" value="TrmE/GcvT_dom1"/>
</dbReference>
<dbReference type="NCBIfam" id="TIGR00528">
    <property type="entry name" value="gcvT"/>
    <property type="match status" value="1"/>
</dbReference>
<dbReference type="NCBIfam" id="NF001567">
    <property type="entry name" value="PRK00389.1"/>
    <property type="match status" value="1"/>
</dbReference>
<dbReference type="PANTHER" id="PTHR43757">
    <property type="entry name" value="AMINOMETHYLTRANSFERASE"/>
    <property type="match status" value="1"/>
</dbReference>
<dbReference type="PANTHER" id="PTHR43757:SF2">
    <property type="entry name" value="AMINOMETHYLTRANSFERASE, MITOCHONDRIAL"/>
    <property type="match status" value="1"/>
</dbReference>
<dbReference type="Pfam" id="PF01571">
    <property type="entry name" value="GCV_T"/>
    <property type="match status" value="1"/>
</dbReference>
<dbReference type="Pfam" id="PF08669">
    <property type="entry name" value="GCV_T_C"/>
    <property type="match status" value="1"/>
</dbReference>
<dbReference type="PIRSF" id="PIRSF006487">
    <property type="entry name" value="GcvT"/>
    <property type="match status" value="1"/>
</dbReference>
<dbReference type="SUPFAM" id="SSF101790">
    <property type="entry name" value="Aminomethyltransferase beta-barrel domain"/>
    <property type="match status" value="1"/>
</dbReference>
<dbReference type="SUPFAM" id="SSF103025">
    <property type="entry name" value="Folate-binding domain"/>
    <property type="match status" value="1"/>
</dbReference>
<gene>
    <name evidence="1" type="primary">gcvT</name>
    <name type="ordered locus">SeSA_A3225</name>
</gene>
<organism>
    <name type="scientific">Salmonella schwarzengrund (strain CVM19633)</name>
    <dbReference type="NCBI Taxonomy" id="439843"/>
    <lineage>
        <taxon>Bacteria</taxon>
        <taxon>Pseudomonadati</taxon>
        <taxon>Pseudomonadota</taxon>
        <taxon>Gammaproteobacteria</taxon>
        <taxon>Enterobacterales</taxon>
        <taxon>Enterobacteriaceae</taxon>
        <taxon>Salmonella</taxon>
    </lineage>
</organism>
<reference key="1">
    <citation type="journal article" date="2011" name="J. Bacteriol.">
        <title>Comparative genomics of 28 Salmonella enterica isolates: evidence for CRISPR-mediated adaptive sublineage evolution.</title>
        <authorList>
            <person name="Fricke W.F."/>
            <person name="Mammel M.K."/>
            <person name="McDermott P.F."/>
            <person name="Tartera C."/>
            <person name="White D.G."/>
            <person name="Leclerc J.E."/>
            <person name="Ravel J."/>
            <person name="Cebula T.A."/>
        </authorList>
    </citation>
    <scope>NUCLEOTIDE SEQUENCE [LARGE SCALE GENOMIC DNA]</scope>
    <source>
        <strain>CVM19633</strain>
    </source>
</reference>
<evidence type="ECO:0000255" key="1">
    <source>
        <dbReference type="HAMAP-Rule" id="MF_00259"/>
    </source>
</evidence>
<feature type="chain" id="PRO_1000114116" description="Aminomethyltransferase">
    <location>
        <begin position="1"/>
        <end position="364"/>
    </location>
</feature>
<protein>
    <recommendedName>
        <fullName evidence="1">Aminomethyltransferase</fullName>
        <ecNumber evidence="1">2.1.2.10</ecNumber>
    </recommendedName>
    <alternativeName>
        <fullName evidence="1">Glycine cleavage system T protein</fullName>
    </alternativeName>
</protein>